<organism>
    <name type="scientific">Salmonella newport (strain SL254)</name>
    <dbReference type="NCBI Taxonomy" id="423368"/>
    <lineage>
        <taxon>Bacteria</taxon>
        <taxon>Pseudomonadati</taxon>
        <taxon>Pseudomonadota</taxon>
        <taxon>Gammaproteobacteria</taxon>
        <taxon>Enterobacterales</taxon>
        <taxon>Enterobacteriaceae</taxon>
        <taxon>Salmonella</taxon>
    </lineage>
</organism>
<sequence>MTATAQQLEFLKNSIKSIQDYPKPGILFRDVTSLLEDPKAYALSIELLVERYKNAGITKVVGTEARGFLFGAPVALGLGVGFVPVRKPRKLPRETIAETYELEYGTDQLEIHVDAIKPGDNVLVVDDLLATGGTIEATVKLIRRLGGKVTDAAFIINLFDLGGEQRLEKQGITCYSLVPFPGH</sequence>
<proteinExistence type="inferred from homology"/>
<keyword id="KW-0963">Cytoplasm</keyword>
<keyword id="KW-0328">Glycosyltransferase</keyword>
<keyword id="KW-0660">Purine salvage</keyword>
<keyword id="KW-0808">Transferase</keyword>
<gene>
    <name evidence="1" type="primary">apt</name>
    <name type="ordered locus">SNSL254_A0533</name>
</gene>
<feature type="chain" id="PRO_1000089003" description="Adenine phosphoribosyltransferase">
    <location>
        <begin position="1"/>
        <end position="183"/>
    </location>
</feature>
<dbReference type="EC" id="2.4.2.7" evidence="1"/>
<dbReference type="EMBL" id="CP001113">
    <property type="protein sequence ID" value="ACF62460.1"/>
    <property type="molecule type" value="Genomic_DNA"/>
</dbReference>
<dbReference type="RefSeq" id="WP_000127350.1">
    <property type="nucleotide sequence ID" value="NZ_CCMR01000003.1"/>
</dbReference>
<dbReference type="SMR" id="B4SWX6"/>
<dbReference type="KEGG" id="see:SNSL254_A0533"/>
<dbReference type="HOGENOM" id="CLU_063339_3_0_6"/>
<dbReference type="UniPathway" id="UPA00588">
    <property type="reaction ID" value="UER00646"/>
</dbReference>
<dbReference type="Proteomes" id="UP000008824">
    <property type="component" value="Chromosome"/>
</dbReference>
<dbReference type="GO" id="GO:0005829">
    <property type="term" value="C:cytosol"/>
    <property type="evidence" value="ECO:0007669"/>
    <property type="project" value="TreeGrafter"/>
</dbReference>
<dbReference type="GO" id="GO:0003999">
    <property type="term" value="F:adenine phosphoribosyltransferase activity"/>
    <property type="evidence" value="ECO:0007669"/>
    <property type="project" value="UniProtKB-UniRule"/>
</dbReference>
<dbReference type="GO" id="GO:0006168">
    <property type="term" value="P:adenine salvage"/>
    <property type="evidence" value="ECO:0007669"/>
    <property type="project" value="InterPro"/>
</dbReference>
<dbReference type="GO" id="GO:0044209">
    <property type="term" value="P:AMP salvage"/>
    <property type="evidence" value="ECO:0007669"/>
    <property type="project" value="UniProtKB-UniRule"/>
</dbReference>
<dbReference type="GO" id="GO:0006166">
    <property type="term" value="P:purine ribonucleoside salvage"/>
    <property type="evidence" value="ECO:0007669"/>
    <property type="project" value="UniProtKB-KW"/>
</dbReference>
<dbReference type="CDD" id="cd06223">
    <property type="entry name" value="PRTases_typeI"/>
    <property type="match status" value="1"/>
</dbReference>
<dbReference type="FunFam" id="3.40.50.2020:FF:000004">
    <property type="entry name" value="Adenine phosphoribosyltransferase"/>
    <property type="match status" value="1"/>
</dbReference>
<dbReference type="Gene3D" id="3.40.50.2020">
    <property type="match status" value="1"/>
</dbReference>
<dbReference type="HAMAP" id="MF_00004">
    <property type="entry name" value="Aden_phosphoribosyltr"/>
    <property type="match status" value="1"/>
</dbReference>
<dbReference type="InterPro" id="IPR005764">
    <property type="entry name" value="Ade_phspho_trans"/>
</dbReference>
<dbReference type="InterPro" id="IPR050120">
    <property type="entry name" value="Adenine_PRTase"/>
</dbReference>
<dbReference type="InterPro" id="IPR000836">
    <property type="entry name" value="PRibTrfase_dom"/>
</dbReference>
<dbReference type="InterPro" id="IPR029057">
    <property type="entry name" value="PRTase-like"/>
</dbReference>
<dbReference type="NCBIfam" id="TIGR01090">
    <property type="entry name" value="apt"/>
    <property type="match status" value="1"/>
</dbReference>
<dbReference type="NCBIfam" id="NF002632">
    <property type="entry name" value="PRK02304.1-1"/>
    <property type="match status" value="1"/>
</dbReference>
<dbReference type="NCBIfam" id="NF002634">
    <property type="entry name" value="PRK02304.1-3"/>
    <property type="match status" value="1"/>
</dbReference>
<dbReference type="NCBIfam" id="NF002636">
    <property type="entry name" value="PRK02304.1-5"/>
    <property type="match status" value="1"/>
</dbReference>
<dbReference type="PANTHER" id="PTHR11776">
    <property type="entry name" value="ADENINE PHOSPHORIBOSYLTRANSFERASE"/>
    <property type="match status" value="1"/>
</dbReference>
<dbReference type="PANTHER" id="PTHR11776:SF7">
    <property type="entry name" value="PHOSPHORIBOSYLTRANSFERASE DOMAIN-CONTAINING PROTEIN"/>
    <property type="match status" value="1"/>
</dbReference>
<dbReference type="Pfam" id="PF00156">
    <property type="entry name" value="Pribosyltran"/>
    <property type="match status" value="1"/>
</dbReference>
<dbReference type="SUPFAM" id="SSF53271">
    <property type="entry name" value="PRTase-like"/>
    <property type="match status" value="1"/>
</dbReference>
<dbReference type="PROSITE" id="PS00103">
    <property type="entry name" value="PUR_PYR_PR_TRANSFER"/>
    <property type="match status" value="1"/>
</dbReference>
<evidence type="ECO:0000255" key="1">
    <source>
        <dbReference type="HAMAP-Rule" id="MF_00004"/>
    </source>
</evidence>
<accession>B4SWX6</accession>
<name>APT_SALNS</name>
<protein>
    <recommendedName>
        <fullName evidence="1">Adenine phosphoribosyltransferase</fullName>
        <shortName evidence="1">APRT</shortName>
        <ecNumber evidence="1">2.4.2.7</ecNumber>
    </recommendedName>
</protein>
<reference key="1">
    <citation type="journal article" date="2011" name="J. Bacteriol.">
        <title>Comparative genomics of 28 Salmonella enterica isolates: evidence for CRISPR-mediated adaptive sublineage evolution.</title>
        <authorList>
            <person name="Fricke W.F."/>
            <person name="Mammel M.K."/>
            <person name="McDermott P.F."/>
            <person name="Tartera C."/>
            <person name="White D.G."/>
            <person name="Leclerc J.E."/>
            <person name="Ravel J."/>
            <person name="Cebula T.A."/>
        </authorList>
    </citation>
    <scope>NUCLEOTIDE SEQUENCE [LARGE SCALE GENOMIC DNA]</scope>
    <source>
        <strain>SL254</strain>
    </source>
</reference>
<comment type="function">
    <text evidence="1">Catalyzes a salvage reaction resulting in the formation of AMP, that is energically less costly than de novo synthesis.</text>
</comment>
<comment type="catalytic activity">
    <reaction evidence="1">
        <text>AMP + diphosphate = 5-phospho-alpha-D-ribose 1-diphosphate + adenine</text>
        <dbReference type="Rhea" id="RHEA:16609"/>
        <dbReference type="ChEBI" id="CHEBI:16708"/>
        <dbReference type="ChEBI" id="CHEBI:33019"/>
        <dbReference type="ChEBI" id="CHEBI:58017"/>
        <dbReference type="ChEBI" id="CHEBI:456215"/>
        <dbReference type="EC" id="2.4.2.7"/>
    </reaction>
</comment>
<comment type="pathway">
    <text evidence="1">Purine metabolism; AMP biosynthesis via salvage pathway; AMP from adenine: step 1/1.</text>
</comment>
<comment type="subunit">
    <text evidence="1">Homodimer.</text>
</comment>
<comment type="subcellular location">
    <subcellularLocation>
        <location evidence="1">Cytoplasm</location>
    </subcellularLocation>
</comment>
<comment type="similarity">
    <text evidence="1">Belongs to the purine/pyrimidine phosphoribosyltransferase family.</text>
</comment>